<name>Y3024_PSEE4</name>
<sequence>MIISTTSQLEGRPVAEYLGVVSAESVQGINFVRDFFARFRDFFGGRSQTLESALKEAREQATEELKARARQLQADAVVGVDFEISMPSVQGGMVVVFATGTAVRLK</sequence>
<accession>Q1I984</accession>
<evidence type="ECO:0000255" key="1">
    <source>
        <dbReference type="HAMAP-Rule" id="MF_00338"/>
    </source>
</evidence>
<dbReference type="EMBL" id="CT573326">
    <property type="protein sequence ID" value="CAK15794.1"/>
    <property type="molecule type" value="Genomic_DNA"/>
</dbReference>
<dbReference type="RefSeq" id="WP_011534182.1">
    <property type="nucleotide sequence ID" value="NC_008027.1"/>
</dbReference>
<dbReference type="SMR" id="Q1I984"/>
<dbReference type="STRING" id="384676.PSEEN3024"/>
<dbReference type="GeneID" id="32806138"/>
<dbReference type="KEGG" id="pen:PSEEN3024"/>
<dbReference type="eggNOG" id="COG0393">
    <property type="taxonomic scope" value="Bacteria"/>
</dbReference>
<dbReference type="HOGENOM" id="CLU_117144_3_2_6"/>
<dbReference type="OrthoDB" id="9796448at2"/>
<dbReference type="Proteomes" id="UP000000658">
    <property type="component" value="Chromosome"/>
</dbReference>
<dbReference type="Gene3D" id="3.30.110.70">
    <property type="entry name" value="Hypothetical protein apc22750. Chain B"/>
    <property type="match status" value="1"/>
</dbReference>
<dbReference type="HAMAP" id="MF_00338">
    <property type="entry name" value="UPF0145"/>
    <property type="match status" value="1"/>
</dbReference>
<dbReference type="InterPro" id="IPR035439">
    <property type="entry name" value="UPF0145_dom_sf"/>
</dbReference>
<dbReference type="InterPro" id="IPR002765">
    <property type="entry name" value="UPF0145_YbjQ-like"/>
</dbReference>
<dbReference type="PANTHER" id="PTHR34068">
    <property type="entry name" value="UPF0145 PROTEIN YBJQ"/>
    <property type="match status" value="1"/>
</dbReference>
<dbReference type="PANTHER" id="PTHR34068:SF1">
    <property type="entry name" value="UPF0145 PROTEIN YBJQ"/>
    <property type="match status" value="1"/>
</dbReference>
<dbReference type="Pfam" id="PF01906">
    <property type="entry name" value="YbjQ_1"/>
    <property type="match status" value="1"/>
</dbReference>
<dbReference type="SUPFAM" id="SSF117782">
    <property type="entry name" value="YbjQ-like"/>
    <property type="match status" value="1"/>
</dbReference>
<gene>
    <name type="ordered locus">PSEEN3024</name>
</gene>
<reference key="1">
    <citation type="journal article" date="2006" name="Nat. Biotechnol.">
        <title>Complete genome sequence of the entomopathogenic and metabolically versatile soil bacterium Pseudomonas entomophila.</title>
        <authorList>
            <person name="Vodovar N."/>
            <person name="Vallenet D."/>
            <person name="Cruveiller S."/>
            <person name="Rouy Z."/>
            <person name="Barbe V."/>
            <person name="Acosta C."/>
            <person name="Cattolico L."/>
            <person name="Jubin C."/>
            <person name="Lajus A."/>
            <person name="Segurens B."/>
            <person name="Vacherie B."/>
            <person name="Wincker P."/>
            <person name="Weissenbach J."/>
            <person name="Lemaitre B."/>
            <person name="Medigue C."/>
            <person name="Boccard F."/>
        </authorList>
    </citation>
    <scope>NUCLEOTIDE SEQUENCE [LARGE SCALE GENOMIC DNA]</scope>
    <source>
        <strain>L48</strain>
    </source>
</reference>
<comment type="similarity">
    <text evidence="1">Belongs to the UPF0145 family.</text>
</comment>
<feature type="chain" id="PRO_1000013022" description="UPF0145 protein PSEEN3024">
    <location>
        <begin position="1"/>
        <end position="106"/>
    </location>
</feature>
<protein>
    <recommendedName>
        <fullName evidence="1">UPF0145 protein PSEEN3024</fullName>
    </recommendedName>
</protein>
<organism>
    <name type="scientific">Pseudomonas entomophila (strain L48)</name>
    <dbReference type="NCBI Taxonomy" id="384676"/>
    <lineage>
        <taxon>Bacteria</taxon>
        <taxon>Pseudomonadati</taxon>
        <taxon>Pseudomonadota</taxon>
        <taxon>Gammaproteobacteria</taxon>
        <taxon>Pseudomonadales</taxon>
        <taxon>Pseudomonadaceae</taxon>
        <taxon>Pseudomonas</taxon>
    </lineage>
</organism>
<proteinExistence type="inferred from homology"/>